<dbReference type="EMBL" id="U00008">
    <property type="protein sequence ID" value="AAA16378.1"/>
    <property type="molecule type" value="Genomic_DNA"/>
</dbReference>
<dbReference type="EMBL" id="U00096">
    <property type="protein sequence ID" value="AAC75240.1"/>
    <property type="molecule type" value="Genomic_DNA"/>
</dbReference>
<dbReference type="EMBL" id="AP009048">
    <property type="protein sequence ID" value="BAA15987.1"/>
    <property type="molecule type" value="Genomic_DNA"/>
</dbReference>
<dbReference type="PIR" id="B64987">
    <property type="entry name" value="B64987"/>
</dbReference>
<dbReference type="RefSeq" id="NP_416684.1">
    <property type="nucleotide sequence ID" value="NC_000913.3"/>
</dbReference>
<dbReference type="RefSeq" id="WP_000088923.1">
    <property type="nucleotide sequence ID" value="NZ_LN832404.1"/>
</dbReference>
<dbReference type="SMR" id="P33915"/>
<dbReference type="BioGRID" id="4260475">
    <property type="interactions" value="6"/>
</dbReference>
<dbReference type="ComplexPortal" id="CPX-4362">
    <property type="entry name" value="Peptide ABC transporter complex"/>
</dbReference>
<dbReference type="DIP" id="DIP-11935N"/>
<dbReference type="FunCoup" id="P33915">
    <property type="interactions" value="259"/>
</dbReference>
<dbReference type="IntAct" id="P33915">
    <property type="interactions" value="1"/>
</dbReference>
<dbReference type="STRING" id="511145.b2179"/>
<dbReference type="TCDB" id="3.A.1.5.21">
    <property type="family name" value="the atp-binding cassette (abc) superfamily"/>
</dbReference>
<dbReference type="jPOST" id="P33915"/>
<dbReference type="PaxDb" id="511145-b2179"/>
<dbReference type="EnsemblBacteria" id="AAC75240">
    <property type="protein sequence ID" value="AAC75240"/>
    <property type="gene ID" value="b2179"/>
</dbReference>
<dbReference type="GeneID" id="946683"/>
<dbReference type="KEGG" id="ecj:JW2167"/>
<dbReference type="KEGG" id="eco:b2179"/>
<dbReference type="KEGG" id="ecoc:C3026_12190"/>
<dbReference type="PATRIC" id="fig|1411691.4.peg.57"/>
<dbReference type="EchoBASE" id="EB1974"/>
<dbReference type="eggNOG" id="COG4239">
    <property type="taxonomic scope" value="Bacteria"/>
</dbReference>
<dbReference type="HOGENOM" id="CLU_028518_4_1_6"/>
<dbReference type="InParanoid" id="P33915"/>
<dbReference type="OMA" id="PSPPTWM"/>
<dbReference type="OrthoDB" id="9805884at2"/>
<dbReference type="PhylomeDB" id="P33915"/>
<dbReference type="BioCyc" id="EcoCyc:YEJE-MONOMER"/>
<dbReference type="BioCyc" id="MetaCyc:YEJE-MONOMER"/>
<dbReference type="PRO" id="PR:P33915"/>
<dbReference type="Proteomes" id="UP000000625">
    <property type="component" value="Chromosome"/>
</dbReference>
<dbReference type="GO" id="GO:0055052">
    <property type="term" value="C:ATP-binding cassette (ABC) transporter complex, substrate-binding subunit-containing"/>
    <property type="evidence" value="ECO:0000303"/>
    <property type="project" value="ComplexPortal"/>
</dbReference>
<dbReference type="GO" id="GO:0016020">
    <property type="term" value="C:membrane"/>
    <property type="evidence" value="ECO:0000303"/>
    <property type="project" value="ComplexPortal"/>
</dbReference>
<dbReference type="GO" id="GO:0005886">
    <property type="term" value="C:plasma membrane"/>
    <property type="evidence" value="ECO:0000314"/>
    <property type="project" value="EcoCyc"/>
</dbReference>
<dbReference type="GO" id="GO:0042884">
    <property type="term" value="P:microcin transport"/>
    <property type="evidence" value="ECO:0000314"/>
    <property type="project" value="ComplexPortal"/>
</dbReference>
<dbReference type="GO" id="GO:0035672">
    <property type="term" value="P:oligopeptide transmembrane transport"/>
    <property type="evidence" value="ECO:0000314"/>
    <property type="project" value="EcoCyc"/>
</dbReference>
<dbReference type="GO" id="GO:0015833">
    <property type="term" value="P:peptide transport"/>
    <property type="evidence" value="ECO:0000303"/>
    <property type="project" value="ComplexPortal"/>
</dbReference>
<dbReference type="CDD" id="cd06261">
    <property type="entry name" value="TM_PBP2"/>
    <property type="match status" value="1"/>
</dbReference>
<dbReference type="FunFam" id="1.10.3720.10:FF:000005">
    <property type="entry name" value="Microcin C ABC transporter permease"/>
    <property type="match status" value="1"/>
</dbReference>
<dbReference type="Gene3D" id="1.10.3720.10">
    <property type="entry name" value="MetI-like"/>
    <property type="match status" value="1"/>
</dbReference>
<dbReference type="InterPro" id="IPR000515">
    <property type="entry name" value="MetI-like"/>
</dbReference>
<dbReference type="InterPro" id="IPR035906">
    <property type="entry name" value="MetI-like_sf"/>
</dbReference>
<dbReference type="NCBIfam" id="NF011596">
    <property type="entry name" value="PRK15021.1"/>
    <property type="match status" value="1"/>
</dbReference>
<dbReference type="PANTHER" id="PTHR30325:SF0">
    <property type="entry name" value="INNER MEMBRANE ABC TRANSPORTER PERMEASE PROTEIN YEJE"/>
    <property type="match status" value="1"/>
</dbReference>
<dbReference type="PANTHER" id="PTHR30325">
    <property type="entry name" value="MEMBRANE COMPONENT OF ABC TRANSPORTER"/>
    <property type="match status" value="1"/>
</dbReference>
<dbReference type="Pfam" id="PF00528">
    <property type="entry name" value="BPD_transp_1"/>
    <property type="match status" value="1"/>
</dbReference>
<dbReference type="SUPFAM" id="SSF161098">
    <property type="entry name" value="MetI-like"/>
    <property type="match status" value="1"/>
</dbReference>
<dbReference type="PROSITE" id="PS50928">
    <property type="entry name" value="ABC_TM1"/>
    <property type="match status" value="1"/>
</dbReference>
<evidence type="ECO:0000255" key="1"/>
<evidence type="ECO:0000255" key="2">
    <source>
        <dbReference type="PROSITE-ProRule" id="PRU00441"/>
    </source>
</evidence>
<evidence type="ECO:0000305" key="3"/>
<proteinExistence type="evidence at protein level"/>
<comment type="function">
    <text>Probably part of a binding-protein-dependent transport system. Probably responsible for the translocation of the substrate across the membrane.</text>
</comment>
<comment type="subcellular location">
    <subcellularLocation>
        <location>Cell inner membrane</location>
        <topology>Multi-pass membrane protein</topology>
    </subcellularLocation>
</comment>
<comment type="similarity">
    <text evidence="3">Belongs to the binding-protein-dependent transport system permease family. OppBC subfamily.</text>
</comment>
<reference key="1">
    <citation type="submission" date="1993-10" db="EMBL/GenBank/DDBJ databases">
        <title>Automated multiplex sequencing of the E.coli genome.</title>
        <authorList>
            <person name="Richterich P."/>
            <person name="Lakey N."/>
            <person name="Gryan G."/>
            <person name="Jaehn L."/>
            <person name="Mintz L."/>
            <person name="Robison K."/>
            <person name="Church G.M."/>
        </authorList>
    </citation>
    <scope>NUCLEOTIDE SEQUENCE [LARGE SCALE GENOMIC DNA]</scope>
    <source>
        <strain>K12 / BHB2600</strain>
    </source>
</reference>
<reference key="2">
    <citation type="journal article" date="1996" name="DNA Res.">
        <title>A 460-kb DNA sequence of the Escherichia coli K-12 genome corresponding to the 40.1-50.0 min region on the linkage map.</title>
        <authorList>
            <person name="Itoh T."/>
            <person name="Aiba H."/>
            <person name="Baba T."/>
            <person name="Fujita K."/>
            <person name="Hayashi K."/>
            <person name="Inada T."/>
            <person name="Isono K."/>
            <person name="Kasai H."/>
            <person name="Kimura S."/>
            <person name="Kitakawa M."/>
            <person name="Kitagawa M."/>
            <person name="Makino K."/>
            <person name="Miki T."/>
            <person name="Mizobuchi K."/>
            <person name="Mori H."/>
            <person name="Mori T."/>
            <person name="Motomura K."/>
            <person name="Nakade S."/>
            <person name="Nakamura Y."/>
            <person name="Nashimoto H."/>
            <person name="Nishio Y."/>
            <person name="Oshima T."/>
            <person name="Saito N."/>
            <person name="Sampei G."/>
            <person name="Seki Y."/>
            <person name="Sivasundaram S."/>
            <person name="Tagami H."/>
            <person name="Takeda J."/>
            <person name="Takemoto K."/>
            <person name="Wada C."/>
            <person name="Yamamoto Y."/>
            <person name="Horiuchi T."/>
        </authorList>
    </citation>
    <scope>NUCLEOTIDE SEQUENCE [LARGE SCALE GENOMIC DNA]</scope>
    <source>
        <strain>K12 / W3110 / ATCC 27325 / DSM 5911</strain>
    </source>
</reference>
<reference key="3">
    <citation type="journal article" date="1997" name="Science">
        <title>The complete genome sequence of Escherichia coli K-12.</title>
        <authorList>
            <person name="Blattner F.R."/>
            <person name="Plunkett G. III"/>
            <person name="Bloch C.A."/>
            <person name="Perna N.T."/>
            <person name="Burland V."/>
            <person name="Riley M."/>
            <person name="Collado-Vides J."/>
            <person name="Glasner J.D."/>
            <person name="Rode C.K."/>
            <person name="Mayhew G.F."/>
            <person name="Gregor J."/>
            <person name="Davis N.W."/>
            <person name="Kirkpatrick H.A."/>
            <person name="Goeden M.A."/>
            <person name="Rose D.J."/>
            <person name="Mau B."/>
            <person name="Shao Y."/>
        </authorList>
    </citation>
    <scope>NUCLEOTIDE SEQUENCE [LARGE SCALE GENOMIC DNA]</scope>
    <source>
        <strain>K12 / MG1655 / ATCC 47076</strain>
    </source>
</reference>
<reference key="4">
    <citation type="journal article" date="2006" name="Mol. Syst. Biol.">
        <title>Highly accurate genome sequences of Escherichia coli K-12 strains MG1655 and W3110.</title>
        <authorList>
            <person name="Hayashi K."/>
            <person name="Morooka N."/>
            <person name="Yamamoto Y."/>
            <person name="Fujita K."/>
            <person name="Isono K."/>
            <person name="Choi S."/>
            <person name="Ohtsubo E."/>
            <person name="Baba T."/>
            <person name="Wanner B.L."/>
            <person name="Mori H."/>
            <person name="Horiuchi T."/>
        </authorList>
    </citation>
    <scope>NUCLEOTIDE SEQUENCE [LARGE SCALE GENOMIC DNA]</scope>
    <source>
        <strain>K12 / W3110 / ATCC 27325 / DSM 5911</strain>
    </source>
</reference>
<reference key="5">
    <citation type="journal article" date="2005" name="Science">
        <title>Global topology analysis of the Escherichia coli inner membrane proteome.</title>
        <authorList>
            <person name="Daley D.O."/>
            <person name="Rapp M."/>
            <person name="Granseth E."/>
            <person name="Melen K."/>
            <person name="Drew D."/>
            <person name="von Heijne G."/>
        </authorList>
    </citation>
    <scope>TOPOLOGY [LARGE SCALE ANALYSIS]</scope>
    <source>
        <strain>K12 / MG1655 / ATCC 47076</strain>
    </source>
</reference>
<accession>P33915</accession>
<name>YEJE_ECOLI</name>
<keyword id="KW-0997">Cell inner membrane</keyword>
<keyword id="KW-1003">Cell membrane</keyword>
<keyword id="KW-0472">Membrane</keyword>
<keyword id="KW-1185">Reference proteome</keyword>
<keyword id="KW-0812">Transmembrane</keyword>
<keyword id="KW-1133">Transmembrane helix</keyword>
<keyword id="KW-0813">Transport</keyword>
<feature type="chain" id="PRO_0000060259" description="Inner membrane ABC transporter permease protein YejE">
    <location>
        <begin position="1"/>
        <end position="341"/>
    </location>
</feature>
<feature type="topological domain" description="Cytoplasmic" evidence="1">
    <location>
        <begin position="1"/>
        <end position="21"/>
    </location>
</feature>
<feature type="transmembrane region" description="Helical" evidence="2">
    <location>
        <begin position="22"/>
        <end position="42"/>
    </location>
</feature>
<feature type="topological domain" description="Periplasmic" evidence="1">
    <location>
        <begin position="43"/>
        <end position="143"/>
    </location>
</feature>
<feature type="transmembrane region" description="Helical" evidence="2">
    <location>
        <begin position="144"/>
        <end position="164"/>
    </location>
</feature>
<feature type="topological domain" description="Cytoplasmic" evidence="1">
    <location>
        <begin position="165"/>
        <end position="178"/>
    </location>
</feature>
<feature type="transmembrane region" description="Helical" evidence="2">
    <location>
        <begin position="179"/>
        <end position="199"/>
    </location>
</feature>
<feature type="topological domain" description="Periplasmic" evidence="1">
    <location>
        <begin position="200"/>
        <end position="201"/>
    </location>
</feature>
<feature type="transmembrane region" description="Helical" evidence="2">
    <location>
        <begin position="202"/>
        <end position="222"/>
    </location>
</feature>
<feature type="topological domain" description="Cytoplasmic" evidence="1">
    <location>
        <begin position="223"/>
        <end position="252"/>
    </location>
</feature>
<feature type="transmembrane region" description="Helical" evidence="2">
    <location>
        <begin position="253"/>
        <end position="273"/>
    </location>
</feature>
<feature type="topological domain" description="Periplasmic" evidence="1">
    <location>
        <begin position="274"/>
        <end position="307"/>
    </location>
</feature>
<feature type="transmembrane region" description="Helical" evidence="2">
    <location>
        <begin position="308"/>
        <end position="328"/>
    </location>
</feature>
<feature type="topological domain" description="Cytoplasmic" evidence="1">
    <location>
        <begin position="329"/>
        <end position="341"/>
    </location>
</feature>
<feature type="domain" description="ABC transmembrane type-1" evidence="2">
    <location>
        <begin position="140"/>
        <end position="332"/>
    </location>
</feature>
<gene>
    <name type="primary">yejE</name>
    <name type="ordered locus">b2179</name>
    <name type="ordered locus">JW2167</name>
</gene>
<organism>
    <name type="scientific">Escherichia coli (strain K12)</name>
    <dbReference type="NCBI Taxonomy" id="83333"/>
    <lineage>
        <taxon>Bacteria</taxon>
        <taxon>Pseudomonadati</taxon>
        <taxon>Pseudomonadota</taxon>
        <taxon>Gammaproteobacteria</taxon>
        <taxon>Enterobacterales</taxon>
        <taxon>Enterobacteriaceae</taxon>
        <taxon>Escherichia</taxon>
    </lineage>
</organism>
<protein>
    <recommendedName>
        <fullName>Inner membrane ABC transporter permease protein YejE</fullName>
    </recommendedName>
</protein>
<sequence>MSRLSPVNQARWARFRHNRRGYWSLWIFLVLFGLSLCSELIANDKPLLVRYDGSWYFPLLKNYSESDFGGPLASQADYQDPWLKQRLENNGWVLWAPIRFGATSINFATNKPFPSPPSRQNWLGTDANGGDVLARILYGTRISVLFGLMLTLCSSVMGVLAGALQGYYGGKVDLWGQRFIEVWSGMPTLFLIILLSSVVQPNFWWLLAITVLFGWMSLVGVVRAEFLRTRNFDYIRAAQALGVSDRSIILRHMLPNAMVATLTFLPFILCSSITTLTSLDFLGFGLPLGSPSLGELLLQGKNNLQAPWLGITAFLSVAILLSLLIFIGEAVRDAFDPNKAV</sequence>